<dbReference type="EC" id="3.4.23.-"/>
<dbReference type="EMBL" id="L06151">
    <property type="protein sequence ID" value="AAA65822.1"/>
    <property type="molecule type" value="mRNA"/>
</dbReference>
<dbReference type="PIR" id="I45856">
    <property type="entry name" value="I45856"/>
</dbReference>
<dbReference type="RefSeq" id="NP_788787.1">
    <property type="nucleotide sequence ID" value="NM_176614.1"/>
</dbReference>
<dbReference type="SMR" id="Q28057"/>
<dbReference type="FunCoup" id="Q28057">
    <property type="interactions" value="69"/>
</dbReference>
<dbReference type="STRING" id="9913.ENSBTAP00000025517"/>
<dbReference type="MEROPS" id="A01.089"/>
<dbReference type="GlyCosmos" id="Q28057">
    <property type="glycosylation" value="6 sites, No reported glycans"/>
</dbReference>
<dbReference type="GlyGen" id="Q28057">
    <property type="glycosylation" value="6 sites"/>
</dbReference>
<dbReference type="iPTMnet" id="Q28057"/>
<dbReference type="PaxDb" id="9913-ENSBTAP00000016233"/>
<dbReference type="Ensembl" id="ENSBTAT00000025517.6">
    <property type="protein sequence ID" value="ENSBTAP00000025517.5"/>
    <property type="gene ID" value="ENSBTAG00000033096.5"/>
</dbReference>
<dbReference type="GeneID" id="337897"/>
<dbReference type="KEGG" id="bta:337897"/>
<dbReference type="CTD" id="337897"/>
<dbReference type="VEuPathDB" id="HostDB:ENSBTAG00000033096"/>
<dbReference type="eggNOG" id="KOG1339">
    <property type="taxonomic scope" value="Eukaryota"/>
</dbReference>
<dbReference type="GeneTree" id="ENSGT00940000153747"/>
<dbReference type="HOGENOM" id="CLU_013253_3_0_1"/>
<dbReference type="InParanoid" id="Q28057"/>
<dbReference type="OMA" id="HEYAVSC"/>
<dbReference type="OrthoDB" id="771136at2759"/>
<dbReference type="Proteomes" id="UP000009136">
    <property type="component" value="Chromosome 29"/>
</dbReference>
<dbReference type="Bgee" id="ENSBTAG00000033096">
    <property type="expression patterns" value="Expressed in conceptus and 24 other cell types or tissues"/>
</dbReference>
<dbReference type="GO" id="GO:0005576">
    <property type="term" value="C:extracellular region"/>
    <property type="evidence" value="ECO:0007669"/>
    <property type="project" value="UniProtKB-SubCell"/>
</dbReference>
<dbReference type="GO" id="GO:0004190">
    <property type="term" value="F:aspartic-type endopeptidase activity"/>
    <property type="evidence" value="ECO:0000318"/>
    <property type="project" value="GO_Central"/>
</dbReference>
<dbReference type="GO" id="GO:0006508">
    <property type="term" value="P:proteolysis"/>
    <property type="evidence" value="ECO:0000318"/>
    <property type="project" value="GO_Central"/>
</dbReference>
<dbReference type="FunFam" id="2.40.70.10:FF:000006">
    <property type="entry name" value="Cathepsin E"/>
    <property type="match status" value="1"/>
</dbReference>
<dbReference type="FunFam" id="2.40.70.10:FF:000004">
    <property type="entry name" value="Pepsin A"/>
    <property type="match status" value="1"/>
</dbReference>
<dbReference type="Gene3D" id="6.10.140.60">
    <property type="match status" value="1"/>
</dbReference>
<dbReference type="Gene3D" id="2.40.70.10">
    <property type="entry name" value="Acid Proteases"/>
    <property type="match status" value="2"/>
</dbReference>
<dbReference type="InterPro" id="IPR001461">
    <property type="entry name" value="Aspartic_peptidase_A1"/>
</dbReference>
<dbReference type="InterPro" id="IPR001969">
    <property type="entry name" value="Aspartic_peptidase_AS"/>
</dbReference>
<dbReference type="InterPro" id="IPR012848">
    <property type="entry name" value="Aspartic_peptidase_N"/>
</dbReference>
<dbReference type="InterPro" id="IPR033121">
    <property type="entry name" value="PEPTIDASE_A1"/>
</dbReference>
<dbReference type="InterPro" id="IPR021109">
    <property type="entry name" value="Peptidase_aspartic_dom_sf"/>
</dbReference>
<dbReference type="PANTHER" id="PTHR47966">
    <property type="entry name" value="BETA-SITE APP-CLEAVING ENZYME, ISOFORM A-RELATED"/>
    <property type="match status" value="1"/>
</dbReference>
<dbReference type="PANTHER" id="PTHR47966:SF49">
    <property type="entry name" value="PEPSIN A-5"/>
    <property type="match status" value="1"/>
</dbReference>
<dbReference type="Pfam" id="PF07966">
    <property type="entry name" value="A1_Propeptide"/>
    <property type="match status" value="1"/>
</dbReference>
<dbReference type="Pfam" id="PF00026">
    <property type="entry name" value="Asp"/>
    <property type="match status" value="1"/>
</dbReference>
<dbReference type="PRINTS" id="PR00792">
    <property type="entry name" value="PEPSIN"/>
</dbReference>
<dbReference type="SUPFAM" id="SSF50630">
    <property type="entry name" value="Acid proteases"/>
    <property type="match status" value="1"/>
</dbReference>
<dbReference type="PROSITE" id="PS00141">
    <property type="entry name" value="ASP_PROTEASE"/>
    <property type="match status" value="2"/>
</dbReference>
<dbReference type="PROSITE" id="PS51767">
    <property type="entry name" value="PEPTIDASE_A1"/>
    <property type="match status" value="1"/>
</dbReference>
<name>PAG2_BOVIN</name>
<protein>
    <recommendedName>
        <fullName>Pregnancy-associated glycoprotein 2</fullName>
        <shortName>PAG 2</shortName>
        <ecNumber>3.4.23.-</ecNumber>
    </recommendedName>
</protein>
<feature type="signal peptide" evidence="2">
    <location>
        <begin position="1"/>
        <end position="15"/>
    </location>
</feature>
<feature type="propeptide" id="PRO_0000026101" description="Activation peptide" evidence="2">
    <location>
        <begin position="16"/>
        <end status="unknown"/>
    </location>
</feature>
<feature type="chain" id="PRO_0000026102" description="Pregnancy-associated glycoprotein 2">
    <location>
        <begin status="unknown"/>
        <end position="376"/>
    </location>
</feature>
<feature type="domain" description="Peptidase A1" evidence="3">
    <location>
        <begin position="68"/>
        <end position="373"/>
    </location>
</feature>
<feature type="active site" evidence="4">
    <location>
        <position position="86"/>
    </location>
</feature>
<feature type="active site" evidence="4">
    <location>
        <position position="267"/>
    </location>
</feature>
<feature type="glycosylation site" description="N-linked (GlcNAc...) asparagine" evidence="7">
    <location>
        <position position="51"/>
    </location>
</feature>
<feature type="glycosylation site" description="N-linked (GlcNAc...) asparagine" evidence="7">
    <location>
        <position position="71"/>
    </location>
</feature>
<feature type="glycosylation site" description="N-linked (GlcNAc...) asparagine" evidence="7">
    <location>
        <position position="114"/>
    </location>
</feature>
<feature type="glycosylation site" description="N-linked (GlcNAc...) asparagine" evidence="7">
    <location>
        <position position="248"/>
    </location>
</feature>
<feature type="glycosylation site" description="N-linked (GlcNAc...) asparagine" evidence="7">
    <location>
        <position position="252"/>
    </location>
</feature>
<feature type="glycosylation site" description="N-linked (GlcNAc...) asparagine" evidence="7">
    <location>
        <position position="343"/>
    </location>
</feature>
<feature type="disulfide bond" evidence="1">
    <location>
        <begin position="99"/>
        <end position="104"/>
    </location>
</feature>
<feature type="disulfide bond" evidence="1">
    <location>
        <begin position="258"/>
        <end position="262"/>
    </location>
</feature>
<feature type="disulfide bond" evidence="1">
    <location>
        <begin position="300"/>
        <end position="333"/>
    </location>
</feature>
<accession>Q28057</accession>
<organism>
    <name type="scientific">Bos taurus</name>
    <name type="common">Bovine</name>
    <dbReference type="NCBI Taxonomy" id="9913"/>
    <lineage>
        <taxon>Eukaryota</taxon>
        <taxon>Metazoa</taxon>
        <taxon>Chordata</taxon>
        <taxon>Craniata</taxon>
        <taxon>Vertebrata</taxon>
        <taxon>Euteleostomi</taxon>
        <taxon>Mammalia</taxon>
        <taxon>Eutheria</taxon>
        <taxon>Laurasiatheria</taxon>
        <taxon>Artiodactyla</taxon>
        <taxon>Ruminantia</taxon>
        <taxon>Pecora</taxon>
        <taxon>Bovidae</taxon>
        <taxon>Bovinae</taxon>
        <taxon>Bos</taxon>
    </lineage>
</organism>
<reference key="1">
    <citation type="journal article" date="1994" name="Biol. Reprod.">
        <title>A novel glycoprotein of the aspartic proteinase gene family expressed in bovine placental trophectoderm.</title>
        <authorList>
            <person name="Xie S."/>
            <person name="Low B.G."/>
            <person name="Nagel R.J."/>
            <person name="Beckers J.-F.M.P."/>
            <person name="Roberts R.M."/>
        </authorList>
    </citation>
    <scope>NUCLEOTIDE SEQUENCE [MRNA]</scope>
    <source>
        <tissue>Placenta</tissue>
    </source>
</reference>
<reference key="2">
    <citation type="journal article" date="2006" name="Reproduction">
        <title>The glycosylation of pregnancy-associated glycoproteins and prolactin-related protein-I in bovine binucleate trophoblast giant cells changes before parturition.</title>
        <authorList>
            <person name="Klisch K."/>
            <person name="Boos A."/>
            <person name="Friedrich M."/>
            <person name="Herzog K."/>
            <person name="Feldmann M."/>
            <person name="Sousa N."/>
            <person name="Beckers J."/>
            <person name="Leiser R."/>
            <person name="Schuler G."/>
        </authorList>
    </citation>
    <scope>GLYCOSYLATION</scope>
</reference>
<sequence length="376" mass="41907">MKWLVLLGLVALSECIVILPLKKMKTLRETLREKNLLNNFLEEQAYRLSKNDSKITIHPLRNYLDTAYVGNITIGTPPQEFRVVFDTGSANLWVPCITCTSPACYTHKTFNPQNSSSFREVGSPITIFYGSGIIQGFLGSDTVRIGNLVSPEQSFGLSLEEYGFDSLPFDGILGLAFPAMGIEDTIPIFDNLWSHGAFSEPVFAFYLNTNKPEGSVVMFGGVDHRYYKGELNWIPVSQTSHWQISMNNISMNGTVTACSCGCEALLDTGTSMIYGPTKLVTNIHKLMNARLENSEYVVSCDAVKTLPPVIFNINGIDYPLRPQAYIIKIQNSCRSVFQGGTENSSLNTWILGDIFLRQYFSVFDRKNRRIGLAPAV</sequence>
<gene>
    <name type="primary">PAG2</name>
</gene>
<proteinExistence type="evidence at protein level"/>
<keyword id="KW-0064">Aspartyl protease</keyword>
<keyword id="KW-1015">Disulfide bond</keyword>
<keyword id="KW-0325">Glycoprotein</keyword>
<keyword id="KW-0378">Hydrolase</keyword>
<keyword id="KW-0645">Protease</keyword>
<keyword id="KW-1185">Reference proteome</keyword>
<keyword id="KW-0964">Secreted</keyword>
<keyword id="KW-0732">Signal</keyword>
<keyword id="KW-0865">Zymogen</keyword>
<comment type="function">
    <text>PAG2 or a processed derivative of this molecule might represent a factor that binds the LH receptor.</text>
</comment>
<comment type="subcellular location">
    <subcellularLocation>
        <location>Secreted</location>
        <location>Extracellular space</location>
    </subcellularLocation>
</comment>
<comment type="tissue specificity">
    <text>Trophoblast and placental tissue. Localized to both the mononucleate and binucleate cells of the trophectoderm.</text>
</comment>
<comment type="developmental stage">
    <text>Expression is detected at days 17-19, coinciding with the beginning of implantation, and continues throughout gestation.</text>
</comment>
<comment type="PTM">
    <text evidence="5">N-Glycosylated; the glycans terminate in either N-acetyl-galactosamine (GalNAc) or N-acetyllactosamine (PubMed:17071780). Terminal GalNAc on Asn-linked glycans is greatly reduced prior to parturition while lactosamine-type N-glycans remain unaltered (PubMed:17071780).</text>
</comment>
<comment type="similarity">
    <text evidence="6">Belongs to the peptidase A1 family.</text>
</comment>
<evidence type="ECO:0000250" key="1"/>
<evidence type="ECO:0000255" key="2"/>
<evidence type="ECO:0000255" key="3">
    <source>
        <dbReference type="PROSITE-ProRule" id="PRU01103"/>
    </source>
</evidence>
<evidence type="ECO:0000255" key="4">
    <source>
        <dbReference type="PROSITE-ProRule" id="PRU10094"/>
    </source>
</evidence>
<evidence type="ECO:0000269" key="5">
    <source>
    </source>
</evidence>
<evidence type="ECO:0000305" key="6"/>
<evidence type="ECO:0000305" key="7">
    <source>
    </source>
</evidence>